<feature type="chain" id="PRO_0000138239" description="CTP synthase">
    <location>
        <begin position="1"/>
        <end position="543"/>
    </location>
</feature>
<feature type="domain" description="Glutamine amidotransferase type-1" evidence="1">
    <location>
        <begin position="292"/>
        <end position="534"/>
    </location>
</feature>
<feature type="region of interest" description="Amidoligase domain" evidence="1">
    <location>
        <begin position="1"/>
        <end position="267"/>
    </location>
</feature>
<feature type="active site" description="Nucleophile; for glutamine hydrolysis" evidence="1">
    <location>
        <position position="381"/>
    </location>
</feature>
<feature type="active site" evidence="1">
    <location>
        <position position="507"/>
    </location>
</feature>
<feature type="active site" evidence="1">
    <location>
        <position position="509"/>
    </location>
</feature>
<feature type="binding site" evidence="1">
    <location>
        <position position="13"/>
    </location>
    <ligand>
        <name>CTP</name>
        <dbReference type="ChEBI" id="CHEBI:37563"/>
        <note>allosteric inhibitor</note>
    </ligand>
</feature>
<feature type="binding site" evidence="1">
    <location>
        <position position="13"/>
    </location>
    <ligand>
        <name>UTP</name>
        <dbReference type="ChEBI" id="CHEBI:46398"/>
    </ligand>
</feature>
<feature type="binding site" evidence="1">
    <location>
        <begin position="14"/>
        <end position="19"/>
    </location>
    <ligand>
        <name>ATP</name>
        <dbReference type="ChEBI" id="CHEBI:30616"/>
    </ligand>
</feature>
<feature type="binding site" evidence="1">
    <location>
        <position position="71"/>
    </location>
    <ligand>
        <name>ATP</name>
        <dbReference type="ChEBI" id="CHEBI:30616"/>
    </ligand>
</feature>
<feature type="binding site" evidence="1">
    <location>
        <position position="71"/>
    </location>
    <ligand>
        <name>Mg(2+)</name>
        <dbReference type="ChEBI" id="CHEBI:18420"/>
    </ligand>
</feature>
<feature type="binding site" evidence="1">
    <location>
        <position position="141"/>
    </location>
    <ligand>
        <name>Mg(2+)</name>
        <dbReference type="ChEBI" id="CHEBI:18420"/>
    </ligand>
</feature>
<feature type="binding site" evidence="1">
    <location>
        <begin position="148"/>
        <end position="150"/>
    </location>
    <ligand>
        <name>CTP</name>
        <dbReference type="ChEBI" id="CHEBI:37563"/>
        <note>allosteric inhibitor</note>
    </ligand>
</feature>
<feature type="binding site" evidence="1">
    <location>
        <begin position="188"/>
        <end position="193"/>
    </location>
    <ligand>
        <name>CTP</name>
        <dbReference type="ChEBI" id="CHEBI:37563"/>
        <note>allosteric inhibitor</note>
    </ligand>
</feature>
<feature type="binding site" evidence="1">
    <location>
        <begin position="188"/>
        <end position="193"/>
    </location>
    <ligand>
        <name>UTP</name>
        <dbReference type="ChEBI" id="CHEBI:46398"/>
    </ligand>
</feature>
<feature type="binding site" evidence="1">
    <location>
        <position position="224"/>
    </location>
    <ligand>
        <name>CTP</name>
        <dbReference type="ChEBI" id="CHEBI:37563"/>
        <note>allosteric inhibitor</note>
    </ligand>
</feature>
<feature type="binding site" evidence="1">
    <location>
        <position position="224"/>
    </location>
    <ligand>
        <name>UTP</name>
        <dbReference type="ChEBI" id="CHEBI:46398"/>
    </ligand>
</feature>
<feature type="binding site" evidence="1">
    <location>
        <position position="354"/>
    </location>
    <ligand>
        <name>L-glutamine</name>
        <dbReference type="ChEBI" id="CHEBI:58359"/>
    </ligand>
</feature>
<feature type="binding site" evidence="1">
    <location>
        <begin position="382"/>
        <end position="385"/>
    </location>
    <ligand>
        <name>L-glutamine</name>
        <dbReference type="ChEBI" id="CHEBI:58359"/>
    </ligand>
</feature>
<feature type="binding site" evidence="1">
    <location>
        <position position="405"/>
    </location>
    <ligand>
        <name>L-glutamine</name>
        <dbReference type="ChEBI" id="CHEBI:58359"/>
    </ligand>
</feature>
<feature type="binding site" evidence="1">
    <location>
        <position position="462"/>
    </location>
    <ligand>
        <name>L-glutamine</name>
        <dbReference type="ChEBI" id="CHEBI:58359"/>
    </ligand>
</feature>
<dbReference type="EC" id="6.3.4.2" evidence="1"/>
<dbReference type="EMBL" id="BA000039">
    <property type="protein sequence ID" value="BAC08319.1"/>
    <property type="molecule type" value="Genomic_DNA"/>
</dbReference>
<dbReference type="RefSeq" id="NP_681557.1">
    <property type="nucleotide sequence ID" value="NC_004113.1"/>
</dbReference>
<dbReference type="RefSeq" id="WP_011056613.1">
    <property type="nucleotide sequence ID" value="NC_004113.1"/>
</dbReference>
<dbReference type="SMR" id="Q8DKT7"/>
<dbReference type="STRING" id="197221.gene:10747359"/>
<dbReference type="EnsemblBacteria" id="BAC08319">
    <property type="protein sequence ID" value="BAC08319"/>
    <property type="gene ID" value="BAC08319"/>
</dbReference>
<dbReference type="KEGG" id="tel:tll0768"/>
<dbReference type="PATRIC" id="fig|197221.4.peg.808"/>
<dbReference type="eggNOG" id="COG0504">
    <property type="taxonomic scope" value="Bacteria"/>
</dbReference>
<dbReference type="UniPathway" id="UPA00159">
    <property type="reaction ID" value="UER00277"/>
</dbReference>
<dbReference type="Proteomes" id="UP000000440">
    <property type="component" value="Chromosome"/>
</dbReference>
<dbReference type="GO" id="GO:0005829">
    <property type="term" value="C:cytosol"/>
    <property type="evidence" value="ECO:0007669"/>
    <property type="project" value="TreeGrafter"/>
</dbReference>
<dbReference type="GO" id="GO:0005524">
    <property type="term" value="F:ATP binding"/>
    <property type="evidence" value="ECO:0007669"/>
    <property type="project" value="UniProtKB-KW"/>
</dbReference>
<dbReference type="GO" id="GO:0003883">
    <property type="term" value="F:CTP synthase activity"/>
    <property type="evidence" value="ECO:0007669"/>
    <property type="project" value="UniProtKB-UniRule"/>
</dbReference>
<dbReference type="GO" id="GO:0004359">
    <property type="term" value="F:glutaminase activity"/>
    <property type="evidence" value="ECO:0007669"/>
    <property type="project" value="RHEA"/>
</dbReference>
<dbReference type="GO" id="GO:0042802">
    <property type="term" value="F:identical protein binding"/>
    <property type="evidence" value="ECO:0007669"/>
    <property type="project" value="TreeGrafter"/>
</dbReference>
<dbReference type="GO" id="GO:0046872">
    <property type="term" value="F:metal ion binding"/>
    <property type="evidence" value="ECO:0007669"/>
    <property type="project" value="UniProtKB-KW"/>
</dbReference>
<dbReference type="GO" id="GO:0044210">
    <property type="term" value="P:'de novo' CTP biosynthetic process"/>
    <property type="evidence" value="ECO:0007669"/>
    <property type="project" value="UniProtKB-UniRule"/>
</dbReference>
<dbReference type="GO" id="GO:0019856">
    <property type="term" value="P:pyrimidine nucleobase biosynthetic process"/>
    <property type="evidence" value="ECO:0007669"/>
    <property type="project" value="TreeGrafter"/>
</dbReference>
<dbReference type="CDD" id="cd03113">
    <property type="entry name" value="CTPS_N"/>
    <property type="match status" value="1"/>
</dbReference>
<dbReference type="CDD" id="cd01746">
    <property type="entry name" value="GATase1_CTP_Synthase"/>
    <property type="match status" value="1"/>
</dbReference>
<dbReference type="FunFam" id="3.40.50.300:FF:000009">
    <property type="entry name" value="CTP synthase"/>
    <property type="match status" value="1"/>
</dbReference>
<dbReference type="FunFam" id="3.40.50.880:FF:000002">
    <property type="entry name" value="CTP synthase"/>
    <property type="match status" value="1"/>
</dbReference>
<dbReference type="Gene3D" id="3.40.50.880">
    <property type="match status" value="1"/>
</dbReference>
<dbReference type="Gene3D" id="3.40.50.300">
    <property type="entry name" value="P-loop containing nucleotide triphosphate hydrolases"/>
    <property type="match status" value="1"/>
</dbReference>
<dbReference type="HAMAP" id="MF_01227">
    <property type="entry name" value="PyrG"/>
    <property type="match status" value="1"/>
</dbReference>
<dbReference type="InterPro" id="IPR029062">
    <property type="entry name" value="Class_I_gatase-like"/>
</dbReference>
<dbReference type="InterPro" id="IPR004468">
    <property type="entry name" value="CTP_synthase"/>
</dbReference>
<dbReference type="InterPro" id="IPR017456">
    <property type="entry name" value="CTP_synthase_N"/>
</dbReference>
<dbReference type="InterPro" id="IPR017926">
    <property type="entry name" value="GATASE"/>
</dbReference>
<dbReference type="InterPro" id="IPR033828">
    <property type="entry name" value="GATase1_CTP_Synthase"/>
</dbReference>
<dbReference type="InterPro" id="IPR027417">
    <property type="entry name" value="P-loop_NTPase"/>
</dbReference>
<dbReference type="NCBIfam" id="NF003792">
    <property type="entry name" value="PRK05380.1"/>
    <property type="match status" value="1"/>
</dbReference>
<dbReference type="NCBIfam" id="TIGR00337">
    <property type="entry name" value="PyrG"/>
    <property type="match status" value="1"/>
</dbReference>
<dbReference type="PANTHER" id="PTHR11550">
    <property type="entry name" value="CTP SYNTHASE"/>
    <property type="match status" value="1"/>
</dbReference>
<dbReference type="PANTHER" id="PTHR11550:SF0">
    <property type="entry name" value="CTP SYNTHASE-RELATED"/>
    <property type="match status" value="1"/>
</dbReference>
<dbReference type="Pfam" id="PF06418">
    <property type="entry name" value="CTP_synth_N"/>
    <property type="match status" value="1"/>
</dbReference>
<dbReference type="Pfam" id="PF00117">
    <property type="entry name" value="GATase"/>
    <property type="match status" value="1"/>
</dbReference>
<dbReference type="SUPFAM" id="SSF52317">
    <property type="entry name" value="Class I glutamine amidotransferase-like"/>
    <property type="match status" value="1"/>
</dbReference>
<dbReference type="SUPFAM" id="SSF52540">
    <property type="entry name" value="P-loop containing nucleoside triphosphate hydrolases"/>
    <property type="match status" value="1"/>
</dbReference>
<dbReference type="PROSITE" id="PS51273">
    <property type="entry name" value="GATASE_TYPE_1"/>
    <property type="match status" value="1"/>
</dbReference>
<organism>
    <name type="scientific">Thermosynechococcus vestitus (strain NIES-2133 / IAM M-273 / BP-1)</name>
    <dbReference type="NCBI Taxonomy" id="197221"/>
    <lineage>
        <taxon>Bacteria</taxon>
        <taxon>Bacillati</taxon>
        <taxon>Cyanobacteriota</taxon>
        <taxon>Cyanophyceae</taxon>
        <taxon>Acaryochloridales</taxon>
        <taxon>Thermosynechococcaceae</taxon>
        <taxon>Thermosynechococcus</taxon>
    </lineage>
</organism>
<comment type="function">
    <text evidence="1">Catalyzes the ATP-dependent amination of UTP to CTP with either L-glutamine or ammonia as the source of nitrogen. Regulates intracellular CTP levels through interactions with the four ribonucleotide triphosphates.</text>
</comment>
<comment type="catalytic activity">
    <reaction evidence="1">
        <text>UTP + L-glutamine + ATP + H2O = CTP + L-glutamate + ADP + phosphate + 2 H(+)</text>
        <dbReference type="Rhea" id="RHEA:26426"/>
        <dbReference type="ChEBI" id="CHEBI:15377"/>
        <dbReference type="ChEBI" id="CHEBI:15378"/>
        <dbReference type="ChEBI" id="CHEBI:29985"/>
        <dbReference type="ChEBI" id="CHEBI:30616"/>
        <dbReference type="ChEBI" id="CHEBI:37563"/>
        <dbReference type="ChEBI" id="CHEBI:43474"/>
        <dbReference type="ChEBI" id="CHEBI:46398"/>
        <dbReference type="ChEBI" id="CHEBI:58359"/>
        <dbReference type="ChEBI" id="CHEBI:456216"/>
        <dbReference type="EC" id="6.3.4.2"/>
    </reaction>
</comment>
<comment type="catalytic activity">
    <reaction evidence="1">
        <text>L-glutamine + H2O = L-glutamate + NH4(+)</text>
        <dbReference type="Rhea" id="RHEA:15889"/>
        <dbReference type="ChEBI" id="CHEBI:15377"/>
        <dbReference type="ChEBI" id="CHEBI:28938"/>
        <dbReference type="ChEBI" id="CHEBI:29985"/>
        <dbReference type="ChEBI" id="CHEBI:58359"/>
    </reaction>
</comment>
<comment type="catalytic activity">
    <reaction evidence="1">
        <text>UTP + NH4(+) + ATP = CTP + ADP + phosphate + 2 H(+)</text>
        <dbReference type="Rhea" id="RHEA:16597"/>
        <dbReference type="ChEBI" id="CHEBI:15378"/>
        <dbReference type="ChEBI" id="CHEBI:28938"/>
        <dbReference type="ChEBI" id="CHEBI:30616"/>
        <dbReference type="ChEBI" id="CHEBI:37563"/>
        <dbReference type="ChEBI" id="CHEBI:43474"/>
        <dbReference type="ChEBI" id="CHEBI:46398"/>
        <dbReference type="ChEBI" id="CHEBI:456216"/>
    </reaction>
</comment>
<comment type="activity regulation">
    <text evidence="1">Allosterically activated by GTP, when glutamine is the substrate; GTP has no effect on the reaction when ammonia is the substrate. The allosteric effector GTP functions by stabilizing the protein conformation that binds the tetrahedral intermediate(s) formed during glutamine hydrolysis. Inhibited by the product CTP, via allosteric rather than competitive inhibition.</text>
</comment>
<comment type="pathway">
    <text evidence="1">Pyrimidine metabolism; CTP biosynthesis via de novo pathway; CTP from UDP: step 2/2.</text>
</comment>
<comment type="subunit">
    <text evidence="1">Homotetramer.</text>
</comment>
<comment type="miscellaneous">
    <text evidence="1">CTPSs have evolved a hybrid strategy for distinguishing between UTP and CTP. The overlapping regions of the product feedback inhibitory and substrate sites recognize a common feature in both compounds, the triphosphate moiety. To differentiate isosteric substrate and product pyrimidine rings, an additional pocket far from the expected kinase/ligase catalytic site, specifically recognizes the cytosine and ribose portions of the product inhibitor.</text>
</comment>
<comment type="similarity">
    <text evidence="1">Belongs to the CTP synthase family.</text>
</comment>
<proteinExistence type="inferred from homology"/>
<accession>Q8DKT7</accession>
<reference key="1">
    <citation type="journal article" date="2002" name="DNA Res.">
        <title>Complete genome structure of the thermophilic cyanobacterium Thermosynechococcus elongatus BP-1.</title>
        <authorList>
            <person name="Nakamura Y."/>
            <person name="Kaneko T."/>
            <person name="Sato S."/>
            <person name="Ikeuchi M."/>
            <person name="Katoh H."/>
            <person name="Sasamoto S."/>
            <person name="Watanabe A."/>
            <person name="Iriguchi M."/>
            <person name="Kawashima K."/>
            <person name="Kimura T."/>
            <person name="Kishida Y."/>
            <person name="Kiyokawa C."/>
            <person name="Kohara M."/>
            <person name="Matsumoto M."/>
            <person name="Matsuno A."/>
            <person name="Nakazaki N."/>
            <person name="Shimpo S."/>
            <person name="Sugimoto M."/>
            <person name="Takeuchi C."/>
            <person name="Yamada M."/>
            <person name="Tabata S."/>
        </authorList>
    </citation>
    <scope>NUCLEOTIDE SEQUENCE [LARGE SCALE GENOMIC DNA]</scope>
    <source>
        <strain>NIES-2133 / IAM M-273 / BP-1</strain>
    </source>
</reference>
<name>PYRG_THEVB</name>
<sequence>MTKYVFVTGGVVSSIGKGIVAASLGRLLKSRQYSVSILKLDPYINVDPGTMSPFQHGEVFVTDDGAETDLDLGHYERFTDTPMSRLNSVTTGSIYQAVINKERRGDYMGGTVQVIPHITNEIKERILRVAKDKNPDVVIIEIGGTVGDIESLPFLEAIRQFRTEVGRHHVLFMHVTLVPWIPSAGEMKTKPTQHSVKELRSIGIQPDILICRCDRPLVPGIKEKLSQFCDVPVECVIPSPDAKSIYEVPLLLEREGLATQVLNLLNLEQRQPDLSQWQALVERLYGSHRPLEVAIVGKYVRLSDAYLSVVEALRHSAIALDQELRIRWVNSEELVENGVETALSNVGAIVVPGGFGIRGVEGKIAAIQYAREQGIPFLGLCLGMQCAVIEWARHIAGLENANSAEFDANTPHPVIHLLPEQQDIVDLGGTMRLGLYACRLAPHSLAEKLYGETVIYERHRHRYEFNNAYRNLFLETGYQITGTSPDGRLVEIIEYPAHPFFIAVQFHPEFRSRPNAPHPLFYGLLAAAAKNSNRDHPQLVPSF</sequence>
<keyword id="KW-0067">ATP-binding</keyword>
<keyword id="KW-0315">Glutamine amidotransferase</keyword>
<keyword id="KW-0436">Ligase</keyword>
<keyword id="KW-0460">Magnesium</keyword>
<keyword id="KW-0479">Metal-binding</keyword>
<keyword id="KW-0547">Nucleotide-binding</keyword>
<keyword id="KW-0665">Pyrimidine biosynthesis</keyword>
<keyword id="KW-1185">Reference proteome</keyword>
<evidence type="ECO:0000255" key="1">
    <source>
        <dbReference type="HAMAP-Rule" id="MF_01227"/>
    </source>
</evidence>
<protein>
    <recommendedName>
        <fullName evidence="1">CTP synthase</fullName>
        <ecNumber evidence="1">6.3.4.2</ecNumber>
    </recommendedName>
    <alternativeName>
        <fullName evidence="1">Cytidine 5'-triphosphate synthase</fullName>
    </alternativeName>
    <alternativeName>
        <fullName evidence="1">Cytidine triphosphate synthetase</fullName>
        <shortName evidence="1">CTP synthetase</shortName>
        <shortName evidence="1">CTPS</shortName>
    </alternativeName>
    <alternativeName>
        <fullName evidence="1">UTP--ammonia ligase</fullName>
    </alternativeName>
</protein>
<gene>
    <name evidence="1" type="primary">pyrG</name>
    <name type="ordered locus">tll0768</name>
</gene>